<name>SCP12_ARATH</name>
<evidence type="ECO:0000250" key="1"/>
<evidence type="ECO:0000255" key="2"/>
<evidence type="ECO:0000269" key="3">
    <source>
    </source>
</evidence>
<evidence type="ECO:0000305" key="4"/>
<keyword id="KW-0025">Alternative splicing</keyword>
<keyword id="KW-0121">Carboxypeptidase</keyword>
<keyword id="KW-1015">Disulfide bond</keyword>
<keyword id="KW-0325">Glycoprotein</keyword>
<keyword id="KW-0378">Hydrolase</keyword>
<keyword id="KW-0645">Protease</keyword>
<keyword id="KW-1185">Reference proteome</keyword>
<keyword id="KW-0964">Secreted</keyword>
<keyword id="KW-0732">Signal</keyword>
<protein>
    <recommendedName>
        <fullName>Serine carboxypeptidase-like 12</fullName>
        <ecNumber>3.4.16.-</ecNumber>
    </recommendedName>
</protein>
<feature type="signal peptide" evidence="2">
    <location>
        <begin position="1"/>
        <end position="21"/>
    </location>
</feature>
<feature type="chain" id="PRO_0000274626" description="Serine carboxypeptidase-like 12">
    <location>
        <begin position="22"/>
        <end position="435"/>
    </location>
</feature>
<feature type="active site" evidence="1">
    <location>
        <position position="176"/>
    </location>
</feature>
<feature type="active site" evidence="1">
    <location>
        <position position="360"/>
    </location>
</feature>
<feature type="active site" evidence="1">
    <location>
        <position position="413"/>
    </location>
</feature>
<feature type="glycosylation site" description="N-linked (GlcNAc...) asparagine" evidence="2">
    <location>
        <position position="101"/>
    </location>
</feature>
<feature type="glycosylation site" description="N-linked (GlcNAc...) asparagine" evidence="2">
    <location>
        <position position="313"/>
    </location>
</feature>
<feature type="glycosylation site" description="N-linked (GlcNAc...) asparagine" evidence="2">
    <location>
        <position position="336"/>
    </location>
</feature>
<feature type="glycosylation site" description="N-linked (GlcNAc...) asparagine" evidence="2">
    <location>
        <position position="344"/>
    </location>
</feature>
<feature type="glycosylation site" description="N-linked (GlcNAc...) asparagine" evidence="2">
    <location>
        <position position="376"/>
    </location>
</feature>
<feature type="glycosylation site" description="N-linked (GlcNAc...) asparagine" evidence="2">
    <location>
        <position position="420"/>
    </location>
</feature>
<feature type="disulfide bond" evidence="1">
    <location>
        <begin position="80"/>
        <end position="323"/>
    </location>
</feature>
<feature type="disulfide bond" evidence="1">
    <location>
        <begin position="244"/>
        <end position="258"/>
    </location>
</feature>
<feature type="disulfide bond" evidence="1">
    <location>
        <begin position="282"/>
        <end position="289"/>
    </location>
</feature>
<feature type="splice variant" id="VSP_027465" description="In isoform 2." evidence="4">
    <original>TRTYSNKMTFATVKGSGHTAEYKPNETFIMFQRWISGHDL</original>
    <variation>IIYFCVIHENLFQ</variation>
    <location>
        <begin position="396"/>
        <end position="435"/>
    </location>
</feature>
<sequence>MKSTPKLLLLLLFIINHHVDSGSIVKFLPGFEGPLPFELETGYIGIGEEEDVQLFYYFIKSERNPKEDPLLLWLSGGPGCSSITGLLFENGPLALKSKVYNGSVPSLVSTTYSWTKTANIIFLDQPIGAGFSYSRIPLIDTPSDTGEVKNIHEFLQKWLSKHPQFSSNPFYASGDSYSGMIVPALVQEISKGNYICCKPPINLQGYILGNPITYFEVDQNYRIPFSHGMALISDELYESIRRDCKGNYFNVDPRNTKCLKLVEEYHKCTDELNEFNILSPDCDTTSPDCFLYPYYLLGYWINDESVRDALHVNKSSIGKWERCTYQNRIPYNKDINNSIPYHMNNSISGYRSLIYSGDHDLVVPFLATQAWIKSLNYSIIHEWRPWMIKDQIAGYTRTYSNKMTFATVKGSGHTAEYKPNETFIMFQRWISGHDL</sequence>
<accession>O81009</accession>
<accession>Q3EBW1</accession>
<comment type="function">
    <text evidence="1">Probable carboxypeptidase.</text>
</comment>
<comment type="subcellular location">
    <subcellularLocation>
        <location evidence="4">Secreted</location>
    </subcellularLocation>
</comment>
<comment type="alternative products">
    <event type="alternative splicing"/>
    <isoform>
        <id>O81009-1</id>
        <name>1</name>
        <sequence type="displayed"/>
    </isoform>
    <isoform>
        <id>O81009-2</id>
        <name>2</name>
        <sequence type="described" ref="VSP_027465"/>
    </isoform>
</comment>
<comment type="tissue specificity">
    <text evidence="3">Expressed in roots.</text>
</comment>
<comment type="miscellaneous">
    <molecule>Isoform 2</molecule>
    <text evidence="4">May be due to a competing donor splice site.</text>
</comment>
<comment type="similarity">
    <text evidence="4">Belongs to the peptidase S10 family.</text>
</comment>
<dbReference type="EC" id="3.4.16.-"/>
<dbReference type="EMBL" id="AC004786">
    <property type="protein sequence ID" value="AAC32439.1"/>
    <property type="molecule type" value="Genomic_DNA"/>
</dbReference>
<dbReference type="EMBL" id="CP002685">
    <property type="protein sequence ID" value="AEC07373.1"/>
    <property type="molecule type" value="Genomic_DNA"/>
</dbReference>
<dbReference type="EMBL" id="CP002685">
    <property type="protein sequence ID" value="AEC07374.1"/>
    <property type="molecule type" value="Genomic_DNA"/>
</dbReference>
<dbReference type="PIR" id="E84618">
    <property type="entry name" value="E84618"/>
</dbReference>
<dbReference type="RefSeq" id="NP_179876.1">
    <molecule id="O81009-1"/>
    <property type="nucleotide sequence ID" value="NM_127857.5"/>
</dbReference>
<dbReference type="RefSeq" id="NP_850033.1">
    <molecule id="O81009-2"/>
    <property type="nucleotide sequence ID" value="NM_179702.1"/>
</dbReference>
<dbReference type="SMR" id="O81009"/>
<dbReference type="FunCoup" id="O81009">
    <property type="interactions" value="1018"/>
</dbReference>
<dbReference type="STRING" id="3702.O81009"/>
<dbReference type="ESTHER" id="arath-SCP12">
    <property type="family name" value="Carboxypeptidase_S10"/>
</dbReference>
<dbReference type="MEROPS" id="S10.A09"/>
<dbReference type="GlyCosmos" id="O81009">
    <property type="glycosylation" value="6 sites, No reported glycans"/>
</dbReference>
<dbReference type="GlyGen" id="O81009">
    <property type="glycosylation" value="6 sites"/>
</dbReference>
<dbReference type="PaxDb" id="3702-AT2G22920.2"/>
<dbReference type="ProteomicsDB" id="226603">
    <molecule id="O81009-1"/>
</dbReference>
<dbReference type="EnsemblPlants" id="AT2G22920.1">
    <molecule id="O81009-2"/>
    <property type="protein sequence ID" value="AT2G22920.1"/>
    <property type="gene ID" value="AT2G22920"/>
</dbReference>
<dbReference type="EnsemblPlants" id="AT2G22920.2">
    <molecule id="O81009-1"/>
    <property type="protein sequence ID" value="AT2G22920.2"/>
    <property type="gene ID" value="AT2G22920"/>
</dbReference>
<dbReference type="GeneID" id="816823"/>
<dbReference type="Gramene" id="AT2G22920.1">
    <molecule id="O81009-2"/>
    <property type="protein sequence ID" value="AT2G22920.1"/>
    <property type="gene ID" value="AT2G22920"/>
</dbReference>
<dbReference type="Gramene" id="AT2G22920.2">
    <molecule id="O81009-1"/>
    <property type="protein sequence ID" value="AT2G22920.2"/>
    <property type="gene ID" value="AT2G22920"/>
</dbReference>
<dbReference type="KEGG" id="ath:AT2G22920"/>
<dbReference type="Araport" id="AT2G22920"/>
<dbReference type="TAIR" id="AT2G22920">
    <property type="gene designation" value="SCPL12"/>
</dbReference>
<dbReference type="eggNOG" id="KOG1282">
    <property type="taxonomic scope" value="Eukaryota"/>
</dbReference>
<dbReference type="HOGENOM" id="CLU_008523_0_1_1"/>
<dbReference type="InParanoid" id="O81009"/>
<dbReference type="OMA" id="RTYANRM"/>
<dbReference type="PhylomeDB" id="O81009"/>
<dbReference type="BioCyc" id="ARA:AT2G22920-MONOMER"/>
<dbReference type="PRO" id="PR:O81009"/>
<dbReference type="Proteomes" id="UP000006548">
    <property type="component" value="Chromosome 2"/>
</dbReference>
<dbReference type="ExpressionAtlas" id="O81009">
    <property type="expression patterns" value="baseline and differential"/>
</dbReference>
<dbReference type="GO" id="GO:0005576">
    <property type="term" value="C:extracellular region"/>
    <property type="evidence" value="ECO:0007669"/>
    <property type="project" value="UniProtKB-SubCell"/>
</dbReference>
<dbReference type="GO" id="GO:0004185">
    <property type="term" value="F:serine-type carboxypeptidase activity"/>
    <property type="evidence" value="ECO:0007669"/>
    <property type="project" value="InterPro"/>
</dbReference>
<dbReference type="GO" id="GO:0006508">
    <property type="term" value="P:proteolysis"/>
    <property type="evidence" value="ECO:0007669"/>
    <property type="project" value="UniProtKB-KW"/>
</dbReference>
<dbReference type="FunFam" id="3.40.50.1820:FF:000148">
    <property type="entry name" value="Serine carboxypeptidase-like 11"/>
    <property type="match status" value="1"/>
</dbReference>
<dbReference type="Gene3D" id="3.40.50.1820">
    <property type="entry name" value="alpha/beta hydrolase"/>
    <property type="match status" value="1"/>
</dbReference>
<dbReference type="InterPro" id="IPR029058">
    <property type="entry name" value="AB_hydrolase_fold"/>
</dbReference>
<dbReference type="InterPro" id="IPR001563">
    <property type="entry name" value="Peptidase_S10"/>
</dbReference>
<dbReference type="PANTHER" id="PTHR11802:SF361">
    <property type="entry name" value="SERINE CARBOXYPEPTIDASE-LIKE 11-RELATED"/>
    <property type="match status" value="1"/>
</dbReference>
<dbReference type="PANTHER" id="PTHR11802">
    <property type="entry name" value="SERINE PROTEASE FAMILY S10 SERINE CARBOXYPEPTIDASE"/>
    <property type="match status" value="1"/>
</dbReference>
<dbReference type="Pfam" id="PF00450">
    <property type="entry name" value="Peptidase_S10"/>
    <property type="match status" value="1"/>
</dbReference>
<dbReference type="PRINTS" id="PR00724">
    <property type="entry name" value="CRBOXYPTASEC"/>
</dbReference>
<dbReference type="SUPFAM" id="SSF53474">
    <property type="entry name" value="alpha/beta-Hydrolases"/>
    <property type="match status" value="1"/>
</dbReference>
<proteinExistence type="evidence at transcript level"/>
<reference key="1">
    <citation type="journal article" date="1999" name="Nature">
        <title>Sequence and analysis of chromosome 2 of the plant Arabidopsis thaliana.</title>
        <authorList>
            <person name="Lin X."/>
            <person name="Kaul S."/>
            <person name="Rounsley S.D."/>
            <person name="Shea T.P."/>
            <person name="Benito M.-I."/>
            <person name="Town C.D."/>
            <person name="Fujii C.Y."/>
            <person name="Mason T.M."/>
            <person name="Bowman C.L."/>
            <person name="Barnstead M.E."/>
            <person name="Feldblyum T.V."/>
            <person name="Buell C.R."/>
            <person name="Ketchum K.A."/>
            <person name="Lee J.J."/>
            <person name="Ronning C.M."/>
            <person name="Koo H.L."/>
            <person name="Moffat K.S."/>
            <person name="Cronin L.A."/>
            <person name="Shen M."/>
            <person name="Pai G."/>
            <person name="Van Aken S."/>
            <person name="Umayam L."/>
            <person name="Tallon L.J."/>
            <person name="Gill J.E."/>
            <person name="Adams M.D."/>
            <person name="Carrera A.J."/>
            <person name="Creasy T.H."/>
            <person name="Goodman H.M."/>
            <person name="Somerville C.R."/>
            <person name="Copenhaver G.P."/>
            <person name="Preuss D."/>
            <person name="Nierman W.C."/>
            <person name="White O."/>
            <person name="Eisen J.A."/>
            <person name="Salzberg S.L."/>
            <person name="Fraser C.M."/>
            <person name="Venter J.C."/>
        </authorList>
    </citation>
    <scope>NUCLEOTIDE SEQUENCE [LARGE SCALE GENOMIC DNA]</scope>
    <source>
        <strain>cv. Columbia</strain>
    </source>
</reference>
<reference key="2">
    <citation type="journal article" date="2017" name="Plant J.">
        <title>Araport11: a complete reannotation of the Arabidopsis thaliana reference genome.</title>
        <authorList>
            <person name="Cheng C.Y."/>
            <person name="Krishnakumar V."/>
            <person name="Chan A.P."/>
            <person name="Thibaud-Nissen F."/>
            <person name="Schobel S."/>
            <person name="Town C.D."/>
        </authorList>
    </citation>
    <scope>GENOME REANNOTATION</scope>
    <source>
        <strain>cv. Columbia</strain>
    </source>
</reference>
<reference key="3">
    <citation type="journal article" date="2005" name="Plant Physiol.">
        <title>An expression and bioinformatics analysis of the Arabidopsis serine carboxypeptidase-like gene family.</title>
        <authorList>
            <person name="Fraser C.M."/>
            <person name="Rider L.W."/>
            <person name="Chapple C."/>
        </authorList>
    </citation>
    <scope>GENE FAMILY</scope>
    <scope>TISSUE SPECIFICITY</scope>
    <scope>NOMENCLATURE</scope>
</reference>
<organism>
    <name type="scientific">Arabidopsis thaliana</name>
    <name type="common">Mouse-ear cress</name>
    <dbReference type="NCBI Taxonomy" id="3702"/>
    <lineage>
        <taxon>Eukaryota</taxon>
        <taxon>Viridiplantae</taxon>
        <taxon>Streptophyta</taxon>
        <taxon>Embryophyta</taxon>
        <taxon>Tracheophyta</taxon>
        <taxon>Spermatophyta</taxon>
        <taxon>Magnoliopsida</taxon>
        <taxon>eudicotyledons</taxon>
        <taxon>Gunneridae</taxon>
        <taxon>Pentapetalae</taxon>
        <taxon>rosids</taxon>
        <taxon>malvids</taxon>
        <taxon>Brassicales</taxon>
        <taxon>Brassicaceae</taxon>
        <taxon>Camelineae</taxon>
        <taxon>Arabidopsis</taxon>
    </lineage>
</organism>
<gene>
    <name type="primary">SCPL12</name>
    <name type="ordered locus">At2g22920</name>
    <name type="ORF">T20K9.13</name>
</gene>